<comment type="function">
    <text evidence="1 3">Catalyzes the first step of the methylation pathway of phosphatidylcholine biosynthesis, the SAM-dependent methylation of phosphatidylethanolamine (PE) to phosphatidylmonomethylethanolamine (PMME).</text>
</comment>
<comment type="catalytic activity">
    <reaction evidence="1 3">
        <text>a 1,2-diacyl-sn-glycero-3-phosphoethanolamine + S-adenosyl-L-methionine = a 1,2-diacyl-sn-glycero-3-phospho-N-methylethanolamine + S-adenosyl-L-homocysteine + H(+)</text>
        <dbReference type="Rhea" id="RHEA:11164"/>
        <dbReference type="ChEBI" id="CHEBI:15378"/>
        <dbReference type="ChEBI" id="CHEBI:57856"/>
        <dbReference type="ChEBI" id="CHEBI:59789"/>
        <dbReference type="ChEBI" id="CHEBI:64573"/>
        <dbReference type="ChEBI" id="CHEBI:64612"/>
        <dbReference type="EC" id="2.1.1.17"/>
    </reaction>
</comment>
<comment type="pathway">
    <text evidence="1 7 8">Phospholipid metabolism; phosphatidylcholine biosynthesis.</text>
</comment>
<comment type="subcellular location">
    <subcellularLocation>
        <location evidence="1 3">Endoplasmic reticulum membrane</location>
        <topology evidence="1">Multi-pass membrane protein</topology>
    </subcellularLocation>
</comment>
<comment type="similarity">
    <text evidence="1">Belongs to the class VI-like SAM-binding methyltransferase superfamily. CHO2 family.</text>
</comment>
<gene>
    <name evidence="6" type="primary">chol-1</name>
    <name type="synonym">cho2</name>
    <name type="ORF">B2E7.130</name>
    <name type="ORF">NCU08045</name>
</gene>
<accession>Q7SAJ6</accession>
<proteinExistence type="evidence at protein level"/>
<reference key="1">
    <citation type="journal article" date="2003" name="Nucleic Acids Res.">
        <title>What's in the genome of a filamentous fungus? Analysis of the Neurospora genome sequence.</title>
        <authorList>
            <person name="Mannhaupt G."/>
            <person name="Montrone C."/>
            <person name="Haase D."/>
            <person name="Mewes H.-W."/>
            <person name="Aign V."/>
            <person name="Hoheisel J.D."/>
            <person name="Fartmann B."/>
            <person name="Nyakatura G."/>
            <person name="Kempken F."/>
            <person name="Maier J."/>
            <person name="Schulte U."/>
        </authorList>
    </citation>
    <scope>NUCLEOTIDE SEQUENCE [LARGE SCALE GENOMIC DNA]</scope>
    <source>
        <strain>ATCC 24698 / 74-OR23-1A / CBS 708.71 / DSM 1257 / FGSC 987</strain>
    </source>
</reference>
<reference key="2">
    <citation type="journal article" date="2003" name="Nature">
        <title>The genome sequence of the filamentous fungus Neurospora crassa.</title>
        <authorList>
            <person name="Galagan J.E."/>
            <person name="Calvo S.E."/>
            <person name="Borkovich K.A."/>
            <person name="Selker E.U."/>
            <person name="Read N.D."/>
            <person name="Jaffe D.B."/>
            <person name="FitzHugh W."/>
            <person name="Ma L.-J."/>
            <person name="Smirnov S."/>
            <person name="Purcell S."/>
            <person name="Rehman B."/>
            <person name="Elkins T."/>
            <person name="Engels R."/>
            <person name="Wang S."/>
            <person name="Nielsen C.B."/>
            <person name="Butler J."/>
            <person name="Endrizzi M."/>
            <person name="Qui D."/>
            <person name="Ianakiev P."/>
            <person name="Bell-Pedersen D."/>
            <person name="Nelson M.A."/>
            <person name="Werner-Washburne M."/>
            <person name="Selitrennikoff C.P."/>
            <person name="Kinsey J.A."/>
            <person name="Braun E.L."/>
            <person name="Zelter A."/>
            <person name="Schulte U."/>
            <person name="Kothe G.O."/>
            <person name="Jedd G."/>
            <person name="Mewes H.-W."/>
            <person name="Staben C."/>
            <person name="Marcotte E."/>
            <person name="Greenberg D."/>
            <person name="Roy A."/>
            <person name="Foley K."/>
            <person name="Naylor J."/>
            <person name="Stange-Thomann N."/>
            <person name="Barrett R."/>
            <person name="Gnerre S."/>
            <person name="Kamal M."/>
            <person name="Kamvysselis M."/>
            <person name="Mauceli E.W."/>
            <person name="Bielke C."/>
            <person name="Rudd S."/>
            <person name="Frishman D."/>
            <person name="Krystofova S."/>
            <person name="Rasmussen C."/>
            <person name="Metzenberg R.L."/>
            <person name="Perkins D.D."/>
            <person name="Kroken S."/>
            <person name="Cogoni C."/>
            <person name="Macino G."/>
            <person name="Catcheside D.E.A."/>
            <person name="Li W."/>
            <person name="Pratt R.J."/>
            <person name="Osmani S.A."/>
            <person name="DeSouza C.P.C."/>
            <person name="Glass N.L."/>
            <person name="Orbach M.J."/>
            <person name="Berglund J.A."/>
            <person name="Voelker R."/>
            <person name="Yarden O."/>
            <person name="Plamann M."/>
            <person name="Seiler S."/>
            <person name="Dunlap J.C."/>
            <person name="Radford A."/>
            <person name="Aramayo R."/>
            <person name="Natvig D.O."/>
            <person name="Alex L.A."/>
            <person name="Mannhaupt G."/>
            <person name="Ebbole D.J."/>
            <person name="Freitag M."/>
            <person name="Paulsen I."/>
            <person name="Sachs M.S."/>
            <person name="Lander E.S."/>
            <person name="Nusbaum C."/>
            <person name="Birren B.W."/>
        </authorList>
    </citation>
    <scope>NUCLEOTIDE SEQUENCE [LARGE SCALE GENOMIC DNA]</scope>
    <source>
        <strain>ATCC 24698 / 74-OR23-1A / CBS 708.71 / DSM 1257 / FGSC 987</strain>
    </source>
</reference>
<reference key="3">
    <citation type="journal article" date="1943" name="J. Biol. Chem.">
        <title>A microbiological method for the determination of choline by use of a mutant of Neurospora.</title>
        <authorList>
            <person name="Horowitz N.H."/>
            <person name="Beadle G.W."/>
        </authorList>
    </citation>
    <scope>PATHWAY</scope>
</reference>
<reference key="4">
    <citation type="journal article" date="1945" name="J. Biol. Chem.">
        <title>The utilization of choline analogues by cholineless mutants of Neurospora.</title>
        <authorList>
            <person name="Horowitz N.H."/>
            <person name="Bonner D."/>
            <person name="Houlahan M.B."/>
        </authorList>
    </citation>
    <scope>PATHWAY</scope>
</reference>
<reference key="5">
    <citation type="journal article" date="1967" name="J. Biol. Chem.">
        <title>Methylation of ethanolamine phosphatides by microsomes from normal and mutant strains of Neurospora crassa.</title>
        <authorList>
            <person name="Scarborough G.A."/>
            <person name="Nyc J.F."/>
        </authorList>
    </citation>
    <scope>FUNCTION</scope>
    <scope>CATALYTIC ACTIVITY</scope>
    <scope>SUBCELLULAR LOCATION</scope>
</reference>
<sequence length="965" mass="109552">MSSSAADPFAARLNSDVRQRHPTASATSKNVEGTSQQKQQQQQQQSEANAAASRVKKTYGKTPDGTVFVVPTTHDMVTQLLDPREPKNLSDVAVLAIIALHFLAAYYLPWGVKRPLFAAIFMFWRLAYNVGIGYLLTIQSKYKLLVTWAKRWKLFENPATGKNPRPWLYNLLKKELETKIPQDYKFEEAPIEYNTWLTFRRVVDLILMCDFISYCLFAIVCAHKPDGEGLFMCFARWAAGITLVGFNLWVKLDAHRVVKDYAWYWGDFFYLIEQELTFDGVFELAPHPMYSIGYAGYYGISMMAASYDVLFISIIAHAAQFAFLVIVENPHIEKTYNPPQPRVRCESEAGSQLQEFASEYSVPSTTGRHDNTPLPVHNLIGLKNLDFFRITDVAIVLLCAYLAVVTMVTPNTRFYQALFVLHALAWRLWYSAGLGVILTMQSEEKMFTRHFLKYGESVGEAWRQWKGIYHLSNCLCHASFIAASYKMYEFPADWTYGWALLKHVVGLSLIALQVWTATSIYESLGEFGWFYGDFFFDSKRQLTYTSIYRFLNNPERVFGTAGLWGAALITWSRAIFLMALAGHFLTLAFLAYVEKPHMQKVYGRNLRDDAGVTKFIKRSLPPPVTEWQQSIDKVLDETKHFIDEFVDAARSRLATGSSTIVKDTSALFNKYPARLTLSKISPDLAGYDPKHYGLSLAGTRVVGTNEKATGKESPNARVLKDVKTQAFEYGAPIRVKWTAPANHSKKDWVGLYMVTDNRSREVTEVPSLGRWVPTNPGEYDTTTDQGILVWDQPVEKKSEDTDLVEGEMVFEGDKLWWTQGVFEFRYHHGGGHHVMSISEPFEIQIPKFDDEHMGVDISGEVGERAVEAALLPVIRNCLDRDPDIAPSNAEERFGGHVERDGKYARRVVYAIRHMFGIDFAPAVVLADGNVRRLAWRICHAKEVLAPFSMSHTNGRTTPVDSKFSE</sequence>
<evidence type="ECO:0000255" key="1">
    <source>
        <dbReference type="HAMAP-Rule" id="MF_03217"/>
    </source>
</evidence>
<evidence type="ECO:0000256" key="2">
    <source>
        <dbReference type="SAM" id="MobiDB-lite"/>
    </source>
</evidence>
<evidence type="ECO:0000269" key="3">
    <source>
    </source>
</evidence>
<evidence type="ECO:0000303" key="4">
    <source>
    </source>
</evidence>
<evidence type="ECO:0000303" key="5">
    <source ref="3"/>
</evidence>
<evidence type="ECO:0000303" key="6">
    <source ref="4"/>
</evidence>
<evidence type="ECO:0000305" key="7">
    <source ref="3"/>
</evidence>
<evidence type="ECO:0000305" key="8">
    <source ref="4"/>
</evidence>
<name>CHO2_NEUCR</name>
<protein>
    <recommendedName>
        <fullName evidence="1 4">Phosphatidylethanolamine N-methyltransferase</fullName>
        <shortName evidence="1">PE methyltransferase</shortName>
        <shortName evidence="1">PEAMT</shortName>
        <shortName evidence="1">PEMT</shortName>
        <ecNumber evidence="1 3">2.1.1.17</ecNumber>
    </recommendedName>
    <alternativeName>
        <fullName evidence="5">Cholineless</fullName>
    </alternativeName>
</protein>
<keyword id="KW-0256">Endoplasmic reticulum</keyword>
<keyword id="KW-0444">Lipid biosynthesis</keyword>
<keyword id="KW-0443">Lipid metabolism</keyword>
<keyword id="KW-0472">Membrane</keyword>
<keyword id="KW-0489">Methyltransferase</keyword>
<keyword id="KW-0594">Phospholipid biosynthesis</keyword>
<keyword id="KW-1208">Phospholipid metabolism</keyword>
<keyword id="KW-1185">Reference proteome</keyword>
<keyword id="KW-0949">S-adenosyl-L-methionine</keyword>
<keyword id="KW-0808">Transferase</keyword>
<keyword id="KW-0812">Transmembrane</keyword>
<keyword id="KW-1133">Transmembrane helix</keyword>
<organism>
    <name type="scientific">Neurospora crassa (strain ATCC 24698 / 74-OR23-1A / CBS 708.71 / DSM 1257 / FGSC 987)</name>
    <dbReference type="NCBI Taxonomy" id="367110"/>
    <lineage>
        <taxon>Eukaryota</taxon>
        <taxon>Fungi</taxon>
        <taxon>Dikarya</taxon>
        <taxon>Ascomycota</taxon>
        <taxon>Pezizomycotina</taxon>
        <taxon>Sordariomycetes</taxon>
        <taxon>Sordariomycetidae</taxon>
        <taxon>Sordariales</taxon>
        <taxon>Sordariaceae</taxon>
        <taxon>Neurospora</taxon>
    </lineage>
</organism>
<feature type="chain" id="PRO_0000405900" description="Phosphatidylethanolamine N-methyltransferase">
    <location>
        <begin position="1"/>
        <end position="965"/>
    </location>
</feature>
<feature type="topological domain" description="Lumenal" evidence="1">
    <location>
        <begin position="1"/>
        <end position="91"/>
    </location>
</feature>
<feature type="transmembrane region" description="Helical" evidence="1">
    <location>
        <begin position="92"/>
        <end position="112"/>
    </location>
</feature>
<feature type="topological domain" description="Cytoplasmic" evidence="1">
    <location>
        <begin position="113"/>
        <end position="115"/>
    </location>
</feature>
<feature type="transmembrane region" description="Helical" evidence="1">
    <location>
        <begin position="116"/>
        <end position="136"/>
    </location>
</feature>
<feature type="topological domain" description="Lumenal" evidence="1">
    <location>
        <begin position="137"/>
        <end position="201"/>
    </location>
</feature>
<feature type="transmembrane region" description="Helical" evidence="1">
    <location>
        <begin position="202"/>
        <end position="222"/>
    </location>
</feature>
<feature type="topological domain" description="Cytoplasmic" evidence="1">
    <location>
        <begin position="223"/>
        <end position="229"/>
    </location>
</feature>
<feature type="transmembrane region" description="Helical" evidence="1">
    <location>
        <begin position="230"/>
        <end position="250"/>
    </location>
</feature>
<feature type="topological domain" description="Lumenal" evidence="1">
    <location>
        <begin position="251"/>
        <end position="279"/>
    </location>
</feature>
<feature type="transmembrane region" description="Helical" evidence="1">
    <location>
        <begin position="280"/>
        <end position="300"/>
    </location>
</feature>
<feature type="topological domain" description="Cytoplasmic" evidence="1">
    <location>
        <begin position="301"/>
        <end position="306"/>
    </location>
</feature>
<feature type="transmembrane region" description="Helical" evidence="1">
    <location>
        <begin position="307"/>
        <end position="327"/>
    </location>
</feature>
<feature type="topological domain" description="Lumenal" evidence="1">
    <location>
        <begin position="328"/>
        <end position="389"/>
    </location>
</feature>
<feature type="transmembrane region" description="Helical" evidence="1">
    <location>
        <begin position="390"/>
        <end position="410"/>
    </location>
</feature>
<feature type="topological domain" description="Cytoplasmic" evidence="1">
    <location>
        <begin position="411"/>
        <end position="417"/>
    </location>
</feature>
<feature type="transmembrane region" description="Helical" evidence="1">
    <location>
        <begin position="418"/>
        <end position="438"/>
    </location>
</feature>
<feature type="topological domain" description="Lumenal" evidence="1">
    <location>
        <begin position="439"/>
        <end position="467"/>
    </location>
</feature>
<feature type="transmembrane region" description="Helical" evidence="1">
    <location>
        <begin position="468"/>
        <end position="488"/>
    </location>
</feature>
<feature type="topological domain" description="Cytoplasmic" evidence="1">
    <location>
        <begin position="489"/>
        <end position="496"/>
    </location>
</feature>
<feature type="transmembrane region" description="Helical" evidence="1">
    <location>
        <begin position="497"/>
        <end position="517"/>
    </location>
</feature>
<feature type="topological domain" description="Lumenal" evidence="1">
    <location>
        <begin position="518"/>
        <end position="573"/>
    </location>
</feature>
<feature type="transmembrane region" description="Helical" evidence="1">
    <location>
        <begin position="574"/>
        <end position="594"/>
    </location>
</feature>
<feature type="topological domain" description="Cytoplasmic" evidence="1">
    <location>
        <begin position="595"/>
        <end position="965"/>
    </location>
</feature>
<feature type="region of interest" description="Disordered" evidence="2">
    <location>
        <begin position="1"/>
        <end position="55"/>
    </location>
</feature>
<feature type="compositionally biased region" description="Polar residues" evidence="2">
    <location>
        <begin position="22"/>
        <end position="35"/>
    </location>
</feature>
<feature type="compositionally biased region" description="Low complexity" evidence="2">
    <location>
        <begin position="36"/>
        <end position="45"/>
    </location>
</feature>
<dbReference type="EC" id="2.1.1.17" evidence="1 3"/>
<dbReference type="EMBL" id="BX897675">
    <property type="protein sequence ID" value="CAE85544.1"/>
    <property type="molecule type" value="Genomic_DNA"/>
</dbReference>
<dbReference type="EMBL" id="CM002239">
    <property type="protein sequence ID" value="EAA33479.1"/>
    <property type="molecule type" value="Genomic_DNA"/>
</dbReference>
<dbReference type="RefSeq" id="XP_962715.1">
    <property type="nucleotide sequence ID" value="XM_957622.2"/>
</dbReference>
<dbReference type="SMR" id="Q7SAJ6"/>
<dbReference type="FunCoup" id="Q7SAJ6">
    <property type="interactions" value="60"/>
</dbReference>
<dbReference type="STRING" id="367110.Q7SAJ6"/>
<dbReference type="PaxDb" id="5141-EFNCRP00000008237"/>
<dbReference type="EnsemblFungi" id="EAA33479">
    <property type="protein sequence ID" value="EAA33479"/>
    <property type="gene ID" value="NCU08045"/>
</dbReference>
<dbReference type="GeneID" id="3878822"/>
<dbReference type="KEGG" id="ncr:NCU08045"/>
<dbReference type="VEuPathDB" id="FungiDB:NCU08045"/>
<dbReference type="HOGENOM" id="CLU_005987_0_0_1"/>
<dbReference type="InParanoid" id="Q7SAJ6"/>
<dbReference type="OMA" id="RIWYSVG"/>
<dbReference type="OrthoDB" id="4583at2759"/>
<dbReference type="UniPathway" id="UPA00753"/>
<dbReference type="Proteomes" id="UP000001805">
    <property type="component" value="Chromosome 4, Linkage Group IV"/>
</dbReference>
<dbReference type="GO" id="GO:0032541">
    <property type="term" value="C:cortical endoplasmic reticulum"/>
    <property type="evidence" value="ECO:0007669"/>
    <property type="project" value="EnsemblFungi"/>
</dbReference>
<dbReference type="GO" id="GO:0005789">
    <property type="term" value="C:endoplasmic reticulum membrane"/>
    <property type="evidence" value="ECO:0007669"/>
    <property type="project" value="UniProtKB-SubCell"/>
</dbReference>
<dbReference type="GO" id="GO:0097038">
    <property type="term" value="C:perinuclear endoplasmic reticulum"/>
    <property type="evidence" value="ECO:0007669"/>
    <property type="project" value="EnsemblFungi"/>
</dbReference>
<dbReference type="GO" id="GO:0004608">
    <property type="term" value="F:phosphatidylethanolamine N-methyltransferase activity"/>
    <property type="evidence" value="ECO:0000318"/>
    <property type="project" value="GO_Central"/>
</dbReference>
<dbReference type="GO" id="GO:0032259">
    <property type="term" value="P:methylation"/>
    <property type="evidence" value="ECO:0007669"/>
    <property type="project" value="UniProtKB-KW"/>
</dbReference>
<dbReference type="GO" id="GO:0006656">
    <property type="term" value="P:phosphatidylcholine biosynthetic process"/>
    <property type="evidence" value="ECO:0000318"/>
    <property type="project" value="GO_Central"/>
</dbReference>
<dbReference type="FunFam" id="2.60.40.2840:FF:000006">
    <property type="entry name" value="Phosphatidylethanolamine N-methyltransferase"/>
    <property type="match status" value="1"/>
</dbReference>
<dbReference type="Gene3D" id="2.60.40.2840">
    <property type="match status" value="1"/>
</dbReference>
<dbReference type="HAMAP" id="MF_03217">
    <property type="entry name" value="PEMT"/>
    <property type="match status" value="1"/>
</dbReference>
<dbReference type="InterPro" id="IPR007318">
    <property type="entry name" value="Phopholipid_MeTrfase"/>
</dbReference>
<dbReference type="InterPro" id="IPR016219">
    <property type="entry name" value="Phosphatid-EA_MeTrfase_fun"/>
</dbReference>
<dbReference type="PANTHER" id="PTHR32138">
    <property type="entry name" value="PHOSPHATIDYLETHANOLAMINE N-METHYLTRANSFERASE"/>
    <property type="match status" value="1"/>
</dbReference>
<dbReference type="PANTHER" id="PTHR32138:SF0">
    <property type="entry name" value="PHOSPHATIDYLETHANOLAMINE N-METHYLTRANSFERASE"/>
    <property type="match status" value="1"/>
</dbReference>
<dbReference type="Pfam" id="PF04191">
    <property type="entry name" value="PEMT"/>
    <property type="match status" value="2"/>
</dbReference>
<dbReference type="PIRSF" id="PIRSF000383">
    <property type="entry name" value="PEAMT"/>
    <property type="match status" value="1"/>
</dbReference>
<dbReference type="PROSITE" id="PS51598">
    <property type="entry name" value="SAM_CHO2"/>
    <property type="match status" value="1"/>
</dbReference>